<name>INAD_DROME</name>
<feature type="chain" id="PRO_0000084194" description="Inactivation-no-after-potential D protein">
    <location>
        <begin position="1"/>
        <end position="674"/>
    </location>
</feature>
<feature type="domain" description="PDZ 1" evidence="1 12">
    <location>
        <begin position="17"/>
        <end position="106"/>
    </location>
</feature>
<feature type="domain" description="PDZ 2" evidence="1 12">
    <location>
        <begin position="249"/>
        <end position="332"/>
    </location>
</feature>
<feature type="domain" description="PDZ 3" evidence="1 12">
    <location>
        <begin position="364"/>
        <end position="448"/>
    </location>
</feature>
<feature type="domain" description="PDZ 4" evidence="1 12">
    <location>
        <begin position="489"/>
        <end position="577"/>
    </location>
</feature>
<feature type="domain" description="PDZ 5" evidence="1 12">
    <location>
        <begin position="584"/>
        <end position="664"/>
    </location>
</feature>
<feature type="region of interest" description="Disordered" evidence="2">
    <location>
        <begin position="133"/>
        <end position="192"/>
    </location>
</feature>
<feature type="region of interest" description="Disordered" evidence="2">
    <location>
        <begin position="458"/>
        <end position="481"/>
    </location>
</feature>
<feature type="compositionally biased region" description="Gly residues" evidence="2">
    <location>
        <begin position="141"/>
        <end position="155"/>
    </location>
</feature>
<feature type="compositionally biased region" description="Polar residues" evidence="2">
    <location>
        <begin position="159"/>
        <end position="175"/>
    </location>
</feature>
<feature type="compositionally biased region" description="Basic and acidic residues" evidence="2">
    <location>
        <begin position="458"/>
        <end position="475"/>
    </location>
</feature>
<feature type="modified residue" description="Phosphoserine" evidence="8">
    <location>
        <position position="598"/>
    </location>
</feature>
<feature type="modified residue" description="Phosphoserine" evidence="8">
    <location>
        <position position="600"/>
    </location>
</feature>
<feature type="mutagenesis site" description="Nearly 2-fold increase in interaction with inaC." evidence="6">
    <original>P</original>
    <variation>L</variation>
    <location>
        <position position="282"/>
    </location>
</feature>
<feature type="mutagenesis site" description="75% reduced interaction with inaC." evidence="6">
    <original>RCH</original>
    <variation>GCL</variation>
    <location>
        <begin position="308"/>
        <end position="310"/>
    </location>
</feature>
<feature type="mutagenesis site" description="100% increased interaction with inaC." evidence="6">
    <original>H</original>
    <variation>L</variation>
    <location>
        <position position="310"/>
    </location>
</feature>
<feature type="mutagenesis site" description="50% reduced interaction with inaC." evidence="6">
    <original>H</original>
    <variation>R</variation>
    <location>
        <position position="310"/>
    </location>
</feature>
<feature type="mutagenesis site" description="Over 3-fold increase in interaction with inaC." evidence="6">
    <original>N</original>
    <variation>S</variation>
    <location>
        <position position="319"/>
    </location>
</feature>
<feature type="mutagenesis site" description="Slight reduction in interaction with inaC." evidence="6">
    <original>K</original>
    <variation>Q</variation>
    <location>
        <position position="333"/>
    </location>
</feature>
<feature type="mutagenesis site" description="In allele inaD-P215; slow recovery of light-induced responses and altered light sensitivity. Abolishes interaction with trp." evidence="9 10">
    <original>M</original>
    <variation>K</variation>
    <location>
        <position position="442"/>
    </location>
</feature>
<feature type="sequence conflict" description="In Ref. 2; AAF81203." evidence="12" ref="2">
    <original>N</original>
    <variation>S</variation>
    <location>
        <position position="319"/>
    </location>
</feature>
<feature type="strand" evidence="15">
    <location>
        <begin position="14"/>
        <end position="21"/>
    </location>
</feature>
<feature type="strand" evidence="15">
    <location>
        <begin position="25"/>
        <end position="27"/>
    </location>
</feature>
<feature type="strand" evidence="15">
    <location>
        <begin position="30"/>
        <end position="37"/>
    </location>
</feature>
<feature type="strand" evidence="15">
    <location>
        <begin position="40"/>
        <end position="42"/>
    </location>
</feature>
<feature type="strand" evidence="15">
    <location>
        <begin position="45"/>
        <end position="53"/>
    </location>
</feature>
<feature type="helix" evidence="15">
    <location>
        <begin position="58"/>
        <end position="62"/>
    </location>
</feature>
<feature type="strand" evidence="15">
    <location>
        <begin position="70"/>
        <end position="74"/>
    </location>
</feature>
<feature type="helix" evidence="15">
    <location>
        <begin position="84"/>
        <end position="93"/>
    </location>
</feature>
<feature type="strand" evidence="15">
    <location>
        <begin position="96"/>
        <end position="104"/>
    </location>
</feature>
<feature type="turn" evidence="19">
    <location>
        <begin position="353"/>
        <end position="356"/>
    </location>
</feature>
<feature type="helix" evidence="19">
    <location>
        <begin position="357"/>
        <end position="360"/>
    </location>
</feature>
<feature type="strand" evidence="19">
    <location>
        <begin position="365"/>
        <end position="370"/>
    </location>
</feature>
<feature type="strand" evidence="19">
    <location>
        <begin position="376"/>
        <end position="384"/>
    </location>
</feature>
<feature type="turn" evidence="19">
    <location>
        <begin position="385"/>
        <end position="387"/>
    </location>
</feature>
<feature type="strand" evidence="19">
    <location>
        <begin position="388"/>
        <end position="397"/>
    </location>
</feature>
<feature type="helix" evidence="19">
    <location>
        <begin position="401"/>
        <end position="404"/>
    </location>
</feature>
<feature type="strand" evidence="19">
    <location>
        <begin position="412"/>
        <end position="416"/>
    </location>
</feature>
<feature type="helix" evidence="19">
    <location>
        <begin position="426"/>
        <end position="435"/>
    </location>
</feature>
<feature type="strand" evidence="19">
    <location>
        <begin position="438"/>
        <end position="445"/>
    </location>
</feature>
<feature type="turn" evidence="18">
    <location>
        <begin position="477"/>
        <end position="479"/>
    </location>
</feature>
<feature type="strand" evidence="18">
    <location>
        <begin position="488"/>
        <end position="493"/>
    </location>
</feature>
<feature type="strand" evidence="18">
    <location>
        <begin position="501"/>
        <end position="504"/>
    </location>
</feature>
<feature type="strand" evidence="18">
    <location>
        <begin position="507"/>
        <end position="510"/>
    </location>
</feature>
<feature type="strand" evidence="18">
    <location>
        <begin position="515"/>
        <end position="520"/>
    </location>
</feature>
<feature type="helix" evidence="18">
    <location>
        <begin position="525"/>
        <end position="529"/>
    </location>
</feature>
<feature type="strand" evidence="18">
    <location>
        <begin position="537"/>
        <end position="541"/>
    </location>
</feature>
<feature type="helix" evidence="18">
    <location>
        <begin position="548"/>
        <end position="550"/>
    </location>
</feature>
<feature type="helix" evidence="18">
    <location>
        <begin position="553"/>
        <end position="561"/>
    </location>
</feature>
<feature type="strand" evidence="18">
    <location>
        <begin position="565"/>
        <end position="573"/>
    </location>
</feature>
<feature type="strand" evidence="17">
    <location>
        <begin position="583"/>
        <end position="588"/>
    </location>
</feature>
<feature type="strand" evidence="16">
    <location>
        <begin position="590"/>
        <end position="593"/>
    </location>
</feature>
<feature type="strand" evidence="17">
    <location>
        <begin position="597"/>
        <end position="601"/>
    </location>
</feature>
<feature type="strand" evidence="17">
    <location>
        <begin position="603"/>
        <end position="611"/>
    </location>
</feature>
<feature type="helix" evidence="17">
    <location>
        <begin position="617"/>
        <end position="622"/>
    </location>
</feature>
<feature type="strand" evidence="17">
    <location>
        <begin position="628"/>
        <end position="632"/>
    </location>
</feature>
<feature type="strand" evidence="16">
    <location>
        <begin position="638"/>
        <end position="640"/>
    </location>
</feature>
<feature type="helix" evidence="17">
    <location>
        <begin position="642"/>
        <end position="650"/>
    </location>
</feature>
<feature type="strand" evidence="17">
    <location>
        <begin position="653"/>
        <end position="661"/>
    </location>
</feature>
<reference evidence="12" key="1">
    <citation type="journal article" date="1995" name="Neuron">
        <title>A novel protein encoded by the InaD gene regulates recovery of visual transduction in Drosophila.</title>
        <authorList>
            <person name="Shieh B.-H."/>
            <person name="Niemeyer B."/>
        </authorList>
    </citation>
    <scope>NUCLEOTIDE SEQUENCE [MRNA]</scope>
    <scope>FUNCTION</scope>
    <scope>TISSUE SPECIFICITY</scope>
    <scope>MUTAGENESIS OF MET-442</scope>
    <source>
        <tissue>Retinal photoreceptor</tissue>
    </source>
</reference>
<reference evidence="12" key="2">
    <citation type="journal article" date="2001" name="J. Biol. Chem.">
        <title>The second PDZ domain of INAD is a type I domain involved in binding to eye protein kinase C. Mutational analysis and naturally occurring variants.</title>
        <authorList>
            <person name="Kumar R."/>
            <person name="Shieh B.-H."/>
        </authorList>
    </citation>
    <scope>NUCLEOTIDE SEQUENCE [GENOMIC DNA]</scope>
    <scope>FUNCTION</scope>
    <scope>MUTAGENESIS OF PRO-282; 308-ARG--HIS-310; HIS-310; ASN-319 AND LYS-333</scope>
    <scope>INTERACTION WITH INAC</scope>
    <source>
        <strain evidence="13">Canton-S</strain>
        <strain evidence="6">Oregon-R</strain>
    </source>
</reference>
<reference evidence="12" key="3">
    <citation type="journal article" date="2000" name="Science">
        <title>The genome sequence of Drosophila melanogaster.</title>
        <authorList>
            <person name="Adams M.D."/>
            <person name="Celniker S.E."/>
            <person name="Holt R.A."/>
            <person name="Evans C.A."/>
            <person name="Gocayne J.D."/>
            <person name="Amanatides P.G."/>
            <person name="Scherer S.E."/>
            <person name="Li P.W."/>
            <person name="Hoskins R.A."/>
            <person name="Galle R.F."/>
            <person name="George R.A."/>
            <person name="Lewis S.E."/>
            <person name="Richards S."/>
            <person name="Ashburner M."/>
            <person name="Henderson S.N."/>
            <person name="Sutton G.G."/>
            <person name="Wortman J.R."/>
            <person name="Yandell M.D."/>
            <person name="Zhang Q."/>
            <person name="Chen L.X."/>
            <person name="Brandon R.C."/>
            <person name="Rogers Y.-H.C."/>
            <person name="Blazej R.G."/>
            <person name="Champe M."/>
            <person name="Pfeiffer B.D."/>
            <person name="Wan K.H."/>
            <person name="Doyle C."/>
            <person name="Baxter E.G."/>
            <person name="Helt G."/>
            <person name="Nelson C.R."/>
            <person name="Miklos G.L.G."/>
            <person name="Abril J.F."/>
            <person name="Agbayani A."/>
            <person name="An H.-J."/>
            <person name="Andrews-Pfannkoch C."/>
            <person name="Baldwin D."/>
            <person name="Ballew R.M."/>
            <person name="Basu A."/>
            <person name="Baxendale J."/>
            <person name="Bayraktaroglu L."/>
            <person name="Beasley E.M."/>
            <person name="Beeson K.Y."/>
            <person name="Benos P.V."/>
            <person name="Berman B.P."/>
            <person name="Bhandari D."/>
            <person name="Bolshakov S."/>
            <person name="Borkova D."/>
            <person name="Botchan M.R."/>
            <person name="Bouck J."/>
            <person name="Brokstein P."/>
            <person name="Brottier P."/>
            <person name="Burtis K.C."/>
            <person name="Busam D.A."/>
            <person name="Butler H."/>
            <person name="Cadieu E."/>
            <person name="Center A."/>
            <person name="Chandra I."/>
            <person name="Cherry J.M."/>
            <person name="Cawley S."/>
            <person name="Dahlke C."/>
            <person name="Davenport L.B."/>
            <person name="Davies P."/>
            <person name="de Pablos B."/>
            <person name="Delcher A."/>
            <person name="Deng Z."/>
            <person name="Mays A.D."/>
            <person name="Dew I."/>
            <person name="Dietz S.M."/>
            <person name="Dodson K."/>
            <person name="Doup L.E."/>
            <person name="Downes M."/>
            <person name="Dugan-Rocha S."/>
            <person name="Dunkov B.C."/>
            <person name="Dunn P."/>
            <person name="Durbin K.J."/>
            <person name="Evangelista C.C."/>
            <person name="Ferraz C."/>
            <person name="Ferriera S."/>
            <person name="Fleischmann W."/>
            <person name="Fosler C."/>
            <person name="Gabrielian A.E."/>
            <person name="Garg N.S."/>
            <person name="Gelbart W.M."/>
            <person name="Glasser K."/>
            <person name="Glodek A."/>
            <person name="Gong F."/>
            <person name="Gorrell J.H."/>
            <person name="Gu Z."/>
            <person name="Guan P."/>
            <person name="Harris M."/>
            <person name="Harris N.L."/>
            <person name="Harvey D.A."/>
            <person name="Heiman T.J."/>
            <person name="Hernandez J.R."/>
            <person name="Houck J."/>
            <person name="Hostin D."/>
            <person name="Houston K.A."/>
            <person name="Howland T.J."/>
            <person name="Wei M.-H."/>
            <person name="Ibegwam C."/>
            <person name="Jalali M."/>
            <person name="Kalush F."/>
            <person name="Karpen G.H."/>
            <person name="Ke Z."/>
            <person name="Kennison J.A."/>
            <person name="Ketchum K.A."/>
            <person name="Kimmel B.E."/>
            <person name="Kodira C.D."/>
            <person name="Kraft C.L."/>
            <person name="Kravitz S."/>
            <person name="Kulp D."/>
            <person name="Lai Z."/>
            <person name="Lasko P."/>
            <person name="Lei Y."/>
            <person name="Levitsky A.A."/>
            <person name="Li J.H."/>
            <person name="Li Z."/>
            <person name="Liang Y."/>
            <person name="Lin X."/>
            <person name="Liu X."/>
            <person name="Mattei B."/>
            <person name="McIntosh T.C."/>
            <person name="McLeod M.P."/>
            <person name="McPherson D."/>
            <person name="Merkulov G."/>
            <person name="Milshina N.V."/>
            <person name="Mobarry C."/>
            <person name="Morris J."/>
            <person name="Moshrefi A."/>
            <person name="Mount S.M."/>
            <person name="Moy M."/>
            <person name="Murphy B."/>
            <person name="Murphy L."/>
            <person name="Muzny D.M."/>
            <person name="Nelson D.L."/>
            <person name="Nelson D.R."/>
            <person name="Nelson K.A."/>
            <person name="Nixon K."/>
            <person name="Nusskern D.R."/>
            <person name="Pacleb J.M."/>
            <person name="Palazzolo M."/>
            <person name="Pittman G.S."/>
            <person name="Pan S."/>
            <person name="Pollard J."/>
            <person name="Puri V."/>
            <person name="Reese M.G."/>
            <person name="Reinert K."/>
            <person name="Remington K."/>
            <person name="Saunders R.D.C."/>
            <person name="Scheeler F."/>
            <person name="Shen H."/>
            <person name="Shue B.C."/>
            <person name="Siden-Kiamos I."/>
            <person name="Simpson M."/>
            <person name="Skupski M.P."/>
            <person name="Smith T.J."/>
            <person name="Spier E."/>
            <person name="Spradling A.C."/>
            <person name="Stapleton M."/>
            <person name="Strong R."/>
            <person name="Sun E."/>
            <person name="Svirskas R."/>
            <person name="Tector C."/>
            <person name="Turner R."/>
            <person name="Venter E."/>
            <person name="Wang A.H."/>
            <person name="Wang X."/>
            <person name="Wang Z.-Y."/>
            <person name="Wassarman D.A."/>
            <person name="Weinstock G.M."/>
            <person name="Weissenbach J."/>
            <person name="Williams S.M."/>
            <person name="Woodage T."/>
            <person name="Worley K.C."/>
            <person name="Wu D."/>
            <person name="Yang S."/>
            <person name="Yao Q.A."/>
            <person name="Ye J."/>
            <person name="Yeh R.-F."/>
            <person name="Zaveri J.S."/>
            <person name="Zhan M."/>
            <person name="Zhang G."/>
            <person name="Zhao Q."/>
            <person name="Zheng L."/>
            <person name="Zheng X.H."/>
            <person name="Zhong F.N."/>
            <person name="Zhong W."/>
            <person name="Zhou X."/>
            <person name="Zhu S.C."/>
            <person name="Zhu X."/>
            <person name="Smith H.O."/>
            <person name="Gibbs R.A."/>
            <person name="Myers E.W."/>
            <person name="Rubin G.M."/>
            <person name="Venter J.C."/>
        </authorList>
    </citation>
    <scope>NUCLEOTIDE SEQUENCE [LARGE SCALE GENOMIC DNA]</scope>
    <source>
        <strain evidence="3">Berkeley</strain>
    </source>
</reference>
<reference key="4">
    <citation type="journal article" date="2002" name="Genome Biol.">
        <title>Annotation of the Drosophila melanogaster euchromatic genome: a systematic review.</title>
        <authorList>
            <person name="Misra S."/>
            <person name="Crosby M.A."/>
            <person name="Mungall C.J."/>
            <person name="Matthews B.B."/>
            <person name="Campbell K.S."/>
            <person name="Hradecky P."/>
            <person name="Huang Y."/>
            <person name="Kaminker J.S."/>
            <person name="Millburn G.H."/>
            <person name="Prochnik S.E."/>
            <person name="Smith C.D."/>
            <person name="Tupy J.L."/>
            <person name="Whitfield E.J."/>
            <person name="Bayraktaroglu L."/>
            <person name="Berman B.P."/>
            <person name="Bettencourt B.R."/>
            <person name="Celniker S.E."/>
            <person name="de Grey A.D.N.J."/>
            <person name="Drysdale R.A."/>
            <person name="Harris N.L."/>
            <person name="Richter J."/>
            <person name="Russo S."/>
            <person name="Schroeder A.J."/>
            <person name="Shu S.Q."/>
            <person name="Stapleton M."/>
            <person name="Yamada C."/>
            <person name="Ashburner M."/>
            <person name="Gelbart W.M."/>
            <person name="Rubin G.M."/>
            <person name="Lewis S.E."/>
        </authorList>
    </citation>
    <scope>GENOME REANNOTATION</scope>
    <source>
        <strain>Berkeley</strain>
    </source>
</reference>
<reference evidence="12" key="5">
    <citation type="submission" date="2003-02" db="EMBL/GenBank/DDBJ databases">
        <authorList>
            <person name="Stapleton M."/>
            <person name="Brokstein P."/>
            <person name="Hong L."/>
            <person name="Agbayani A."/>
            <person name="Carlson J.W."/>
            <person name="Champe M."/>
            <person name="Chavez C."/>
            <person name="Dorsett V."/>
            <person name="Dresnek D."/>
            <person name="Farfan D."/>
            <person name="Frise E."/>
            <person name="George R.A."/>
            <person name="Gonzalez M."/>
            <person name="Guarin H."/>
            <person name="Kronmiller B."/>
            <person name="Li P.W."/>
            <person name="Liao G."/>
            <person name="Miranda A."/>
            <person name="Mungall C.J."/>
            <person name="Nunoo J."/>
            <person name="Pacleb J.M."/>
            <person name="Paragas V."/>
            <person name="Park S."/>
            <person name="Patel S."/>
            <person name="Phouanenavong S."/>
            <person name="Wan K.H."/>
            <person name="Yu C."/>
            <person name="Lewis S.E."/>
            <person name="Rubin G.M."/>
            <person name="Celniker S.E."/>
        </authorList>
    </citation>
    <scope>NUCLEOTIDE SEQUENCE [LARGE SCALE MRNA]</scope>
    <source>
        <strain evidence="12">Berkeley</strain>
        <tissue evidence="12">Head</tissue>
    </source>
</reference>
<reference key="6">
    <citation type="journal article" date="1996" name="Neuron">
        <title>Regulation of the TRP Ca2+ channel by INAD in Drosophila photoreceptors.</title>
        <authorList>
            <person name="Shieh B.-H."/>
            <person name="Zhu M.-Y."/>
        </authorList>
    </citation>
    <scope>INTERACTION WITH TRP</scope>
    <scope>MUTAGENESIS OF MET-442</scope>
</reference>
<reference key="7">
    <citation type="journal article" date="1997" name="Neuron">
        <title>Requirement for the PDZ domain protein, INAD, for localization of the TRP store-operated channel to a signaling complex.</title>
        <authorList>
            <person name="Chevesich J."/>
            <person name="Kreuz A.J."/>
            <person name="Montell C."/>
        </authorList>
    </citation>
    <scope>SUBCELLULAR LOCATION</scope>
    <scope>IDENTIFICATION IN A COMPLEX WITH TRP; NORPA; RHODOPSIN AND CALMODULIN</scope>
</reference>
<reference key="8">
    <citation type="journal article" date="2000" name="J. Biol. Chem.">
        <title>Reversible phosphorylation of the signal transduction complex in Drosophila photoreceptors.</title>
        <authorList>
            <person name="Liu M."/>
            <person name="Parker L.L."/>
            <person name="Wadzinski B.E."/>
            <person name="Shieh B.-H."/>
        </authorList>
    </citation>
    <scope>PHOSPHORYLATION</scope>
</reference>
<reference key="9">
    <citation type="journal article" date="2000" name="J. Cell Biol.">
        <title>TRP and the PDZ protein, INAD, form the core complex required for retention of the signalplex in Drosophila photoreceptor cells.</title>
        <authorList>
            <person name="Li H.-S."/>
            <person name="Montell C."/>
        </authorList>
    </citation>
    <scope>INTERACTION WITH TRP</scope>
</reference>
<reference key="10">
    <citation type="journal article" date="2001" name="J. Biol. Chem.">
        <title>Regulation of Drosophila TRPL channels by immunophilin FKBP59.</title>
        <authorList>
            <person name="Goel M."/>
            <person name="Garcia R."/>
            <person name="Estacion M."/>
            <person name="Schilling W.P."/>
        </authorList>
    </citation>
    <scope>INTERACTION WITH FKBP59</scope>
    <scope>IDENTIFICATION IN A COMPLEX WITH TRPL</scope>
</reference>
<reference key="11">
    <citation type="journal article" date="2007" name="Mol. Biosyst.">
        <title>An integrated chemical, mass spectrometric and computational strategy for (quantitative) phosphoproteomics: application to Drosophila melanogaster Kc167 cells.</title>
        <authorList>
            <person name="Bodenmiller B."/>
            <person name="Mueller L.N."/>
            <person name="Pedrioli P.G.A."/>
            <person name="Pflieger D."/>
            <person name="Juenger M.A."/>
            <person name="Eng J.K."/>
            <person name="Aebersold R."/>
            <person name="Tao W.A."/>
        </authorList>
    </citation>
    <scope>PHOSPHORYLATION [LARGE SCALE ANALYSIS] AT SER-598 AND SER-600</scope>
    <scope>IDENTIFICATION BY MASS SPECTROMETRY</scope>
</reference>
<reference evidence="12" key="12">
    <citation type="journal article" date="2001" name="EMBO J.">
        <title>Functional relevance of the disulfide-linked complex of the N-terminal PDZ domain of InaD with NorpA.</title>
        <authorList>
            <person name="Kimple M.E."/>
            <person name="Siderovski D.P."/>
            <person name="Sondek J."/>
        </authorList>
    </citation>
    <scope>X-RAY CRYSTALLOGRAPHY (1.8 ANGSTROMS) OF 11-107 IN A COMPLEX WITH NORPA</scope>
</reference>
<evidence type="ECO:0000255" key="1">
    <source>
        <dbReference type="PROSITE-ProRule" id="PRU00143"/>
    </source>
</evidence>
<evidence type="ECO:0000256" key="2">
    <source>
        <dbReference type="SAM" id="MobiDB-lite"/>
    </source>
</evidence>
<evidence type="ECO:0000269" key="3">
    <source>
    </source>
</evidence>
<evidence type="ECO:0000269" key="4">
    <source>
    </source>
</evidence>
<evidence type="ECO:0000269" key="5">
    <source>
    </source>
</evidence>
<evidence type="ECO:0000269" key="6">
    <source>
    </source>
</evidence>
<evidence type="ECO:0000269" key="7">
    <source>
    </source>
</evidence>
<evidence type="ECO:0000269" key="8">
    <source>
    </source>
</evidence>
<evidence type="ECO:0000269" key="9">
    <source>
    </source>
</evidence>
<evidence type="ECO:0000269" key="10">
    <source>
    </source>
</evidence>
<evidence type="ECO:0000269" key="11">
    <source>
    </source>
</evidence>
<evidence type="ECO:0000305" key="12"/>
<evidence type="ECO:0000312" key="13">
    <source>
        <dbReference type="EMBL" id="AAF81203.1"/>
    </source>
</evidence>
<evidence type="ECO:0000312" key="14">
    <source>
        <dbReference type="EMBL" id="AAO42637.1"/>
    </source>
</evidence>
<evidence type="ECO:0007829" key="15">
    <source>
        <dbReference type="PDB" id="1IHJ"/>
    </source>
</evidence>
<evidence type="ECO:0007829" key="16">
    <source>
        <dbReference type="PDB" id="2LA8"/>
    </source>
</evidence>
<evidence type="ECO:0007829" key="17">
    <source>
        <dbReference type="PDB" id="2QKV"/>
    </source>
</evidence>
<evidence type="ECO:0007829" key="18">
    <source>
        <dbReference type="PDB" id="3R0H"/>
    </source>
</evidence>
<evidence type="ECO:0007829" key="19">
    <source>
        <dbReference type="PDB" id="5F67"/>
    </source>
</evidence>
<organism evidence="14">
    <name type="scientific">Drosophila melanogaster</name>
    <name type="common">Fruit fly</name>
    <dbReference type="NCBI Taxonomy" id="7227"/>
    <lineage>
        <taxon>Eukaryota</taxon>
        <taxon>Metazoa</taxon>
        <taxon>Ecdysozoa</taxon>
        <taxon>Arthropoda</taxon>
        <taxon>Hexapoda</taxon>
        <taxon>Insecta</taxon>
        <taxon>Pterygota</taxon>
        <taxon>Neoptera</taxon>
        <taxon>Endopterygota</taxon>
        <taxon>Diptera</taxon>
        <taxon>Brachycera</taxon>
        <taxon>Muscomorpha</taxon>
        <taxon>Ephydroidea</taxon>
        <taxon>Drosophilidae</taxon>
        <taxon>Drosophila</taxon>
        <taxon>Sophophora</taxon>
    </lineage>
</organism>
<sequence length="674" mass="74332">MVQFLGKQGTAGELIHMVTLDKTGKKSFGICIVRGEVKDSPNTKTTGIFIKGIVPDSPAHLCGRLKVGDRILSLNGKDVRNSTEQAVIDLIKEADFKIELEIQTFDKSDEQQAKSDPRSNGYMQAKNKFNQEQTTNNNASGGQGMGQGQGQGQGMAGMNRQQSMQKRNTTFTASMRQKHSNYADEDDEDTRDMTGRIRTEAGYEIDRASAGNCKLNKQEKDRDKEQEDEFGYTMAKINKRYNMMKDLRRIEVQRDASKPLGLALAGHKDRQKMACFVAGVDPNGALGSVDIKPGDEIVEVNGNVLKNRCHLNASAVFKNVDGDKLVMITSRRKPNDEGMCVKPIKKFPTASDETKFIFDQFPKARTVQVRKEGFLGIMVIYGKHAEVGSGIFISDLREGSNAELAGVKVGDMLLAVNQDVTLESNYDDATGLLKRAEGVVTMILLTLKSEEAIKAEKAAEEKKKEEAKKEEEKPQEPATAEIKPNKKILIELKVEKKPMGVIVCGGKNNHVTTGCVITHVYPEGQVAADKRLKIFDHICDINGTPIHVGSMTTLKVHQLFHTTYEKAVTLTVFRADPPELEKFNVDLMKKAGKELGLSLSPNEIGCTIADLIQGQYPEIDSKLQRGDIITKFNGDALEGLPFQVCYALFKGANGKVSMEVTRPKPTLRTEAPKA</sequence>
<dbReference type="EMBL" id="U15803">
    <property type="protein sequence ID" value="AAC36490.1"/>
    <property type="molecule type" value="mRNA"/>
</dbReference>
<dbReference type="EMBL" id="AF245280">
    <property type="protein sequence ID" value="AAF81203.1"/>
    <property type="molecule type" value="Genomic_DNA"/>
</dbReference>
<dbReference type="EMBL" id="AE013599">
    <property type="protein sequence ID" value="AAF46915.1"/>
    <property type="molecule type" value="Genomic_DNA"/>
</dbReference>
<dbReference type="EMBL" id="BT004473">
    <property type="protein sequence ID" value="AAO42637.1"/>
    <property type="molecule type" value="mRNA"/>
</dbReference>
<dbReference type="RefSeq" id="NP_726260.1">
    <property type="nucleotide sequence ID" value="NM_166566.1"/>
</dbReference>
<dbReference type="PDB" id="1IHJ">
    <property type="method" value="X-ray"/>
    <property type="resolution" value="1.80 A"/>
    <property type="chains" value="A/B=11-107"/>
</dbReference>
<dbReference type="PDB" id="2LA8">
    <property type="method" value="NMR"/>
    <property type="chains" value="A=580-665"/>
</dbReference>
<dbReference type="PDB" id="2QKT">
    <property type="method" value="X-ray"/>
    <property type="resolution" value="2.05 A"/>
    <property type="chains" value="A/B=580-665"/>
</dbReference>
<dbReference type="PDB" id="2QKU">
    <property type="method" value="X-ray"/>
    <property type="resolution" value="2.20 A"/>
    <property type="chains" value="A/B/C=580-665"/>
</dbReference>
<dbReference type="PDB" id="2QKV">
    <property type="method" value="X-ray"/>
    <property type="resolution" value="1.55 A"/>
    <property type="chains" value="A/B=580-665"/>
</dbReference>
<dbReference type="PDB" id="3R0H">
    <property type="method" value="X-ray"/>
    <property type="resolution" value="2.60 A"/>
    <property type="chains" value="A/B/C/D/E/F/G/H=473-674"/>
</dbReference>
<dbReference type="PDB" id="5F67">
    <property type="method" value="X-ray"/>
    <property type="resolution" value="1.76 A"/>
    <property type="chains" value="A/B=345-448"/>
</dbReference>
<dbReference type="PDB" id="6IRE">
    <property type="method" value="X-ray"/>
    <property type="resolution" value="3.25 A"/>
    <property type="chains" value="B=478-671"/>
</dbReference>
<dbReference type="PDBsum" id="1IHJ"/>
<dbReference type="PDBsum" id="2LA8"/>
<dbReference type="PDBsum" id="2QKT"/>
<dbReference type="PDBsum" id="2QKU"/>
<dbReference type="PDBsum" id="2QKV"/>
<dbReference type="PDBsum" id="3R0H"/>
<dbReference type="PDBsum" id="5F67"/>
<dbReference type="PDBsum" id="6IRE"/>
<dbReference type="BMRB" id="Q24008"/>
<dbReference type="SMR" id="Q24008"/>
<dbReference type="BioGRID" id="63241">
    <property type="interactions" value="22"/>
</dbReference>
<dbReference type="DIP" id="DIP-18621N"/>
<dbReference type="FunCoup" id="Q24008">
    <property type="interactions" value="41"/>
</dbReference>
<dbReference type="IntAct" id="Q24008">
    <property type="interactions" value="10"/>
</dbReference>
<dbReference type="MINT" id="Q24008"/>
<dbReference type="STRING" id="7227.FBpp0293662"/>
<dbReference type="iPTMnet" id="Q24008"/>
<dbReference type="PaxDb" id="7227-FBpp0293662"/>
<dbReference type="DNASU" id="37629"/>
<dbReference type="EnsemblMetazoa" id="FBtr0071909">
    <property type="protein sequence ID" value="FBpp0071820"/>
    <property type="gene ID" value="FBgn0001263"/>
</dbReference>
<dbReference type="GeneID" id="37629"/>
<dbReference type="KEGG" id="dme:Dmel_CG3504"/>
<dbReference type="AGR" id="FB:FBgn0001263"/>
<dbReference type="CTD" id="37629"/>
<dbReference type="FlyBase" id="FBgn0001263">
    <property type="gene designation" value="inaD"/>
</dbReference>
<dbReference type="VEuPathDB" id="VectorBase:FBgn0001263"/>
<dbReference type="eggNOG" id="KOG3528">
    <property type="taxonomic scope" value="Eukaryota"/>
</dbReference>
<dbReference type="HOGENOM" id="CLU_025815_0_0_1"/>
<dbReference type="InParanoid" id="Q24008"/>
<dbReference type="OrthoDB" id="438726at2759"/>
<dbReference type="PhylomeDB" id="Q24008"/>
<dbReference type="Reactome" id="R-DME-983168">
    <property type="pathway name" value="Antigen processing: Ubiquitination &amp; Proteasome degradation"/>
</dbReference>
<dbReference type="SignaLink" id="Q24008"/>
<dbReference type="BioGRID-ORCS" id="37629">
    <property type="hits" value="0 hits in 3 CRISPR screens"/>
</dbReference>
<dbReference type="ChiTaRS" id="inaD">
    <property type="organism name" value="fly"/>
</dbReference>
<dbReference type="EvolutionaryTrace" id="Q24008"/>
<dbReference type="GenomeRNAi" id="37629"/>
<dbReference type="PRO" id="PR:Q24008"/>
<dbReference type="Proteomes" id="UP000000803">
    <property type="component" value="Chromosome 2R"/>
</dbReference>
<dbReference type="Bgee" id="FBgn0001263">
    <property type="expression patterns" value="Expressed in outer photoreceptor cell (Drosophila) in insect head and 37 other cell types or tissues"/>
</dbReference>
<dbReference type="ExpressionAtlas" id="Q24008">
    <property type="expression patterns" value="baseline and differential"/>
</dbReference>
<dbReference type="GO" id="GO:0016027">
    <property type="term" value="C:inaD signaling complex"/>
    <property type="evidence" value="ECO:0000353"/>
    <property type="project" value="FlyBase"/>
</dbReference>
<dbReference type="GO" id="GO:0016028">
    <property type="term" value="C:rhabdomere"/>
    <property type="evidence" value="ECO:0000314"/>
    <property type="project" value="FlyBase"/>
</dbReference>
<dbReference type="GO" id="GO:0005516">
    <property type="term" value="F:calmodulin binding"/>
    <property type="evidence" value="ECO:0000304"/>
    <property type="project" value="FlyBase"/>
</dbReference>
<dbReference type="GO" id="GO:0017022">
    <property type="term" value="F:myosin binding"/>
    <property type="evidence" value="ECO:0000304"/>
    <property type="project" value="FlyBase"/>
</dbReference>
<dbReference type="GO" id="GO:0031473">
    <property type="term" value="F:myosin III binding"/>
    <property type="evidence" value="ECO:0000353"/>
    <property type="project" value="FlyBase"/>
</dbReference>
<dbReference type="GO" id="GO:0009881">
    <property type="term" value="F:photoreceptor activity"/>
    <property type="evidence" value="ECO:0000315"/>
    <property type="project" value="FlyBase"/>
</dbReference>
<dbReference type="GO" id="GO:0030159">
    <property type="term" value="F:signaling receptor complex adaptor activity"/>
    <property type="evidence" value="ECO:0000314"/>
    <property type="project" value="FlyBase"/>
</dbReference>
<dbReference type="GO" id="GO:0071482">
    <property type="term" value="P:cellular response to light stimulus"/>
    <property type="evidence" value="ECO:0000315"/>
    <property type="project" value="FlyBase"/>
</dbReference>
<dbReference type="GO" id="GO:0050962">
    <property type="term" value="P:detection of light stimulus involved in sensory perception"/>
    <property type="evidence" value="ECO:0000315"/>
    <property type="project" value="FlyBase"/>
</dbReference>
<dbReference type="GO" id="GO:0016059">
    <property type="term" value="P:negative regulation of opsin-mediated signaling pathway"/>
    <property type="evidence" value="ECO:0000315"/>
    <property type="project" value="FlyBase"/>
</dbReference>
<dbReference type="GO" id="GO:0007602">
    <property type="term" value="P:phototransduction"/>
    <property type="evidence" value="ECO:0000315"/>
    <property type="project" value="FlyBase"/>
</dbReference>
<dbReference type="GO" id="GO:0008104">
    <property type="term" value="P:protein localization"/>
    <property type="evidence" value="ECO:0000304"/>
    <property type="project" value="FlyBase"/>
</dbReference>
<dbReference type="GO" id="GO:0007605">
    <property type="term" value="P:sensory perception of sound"/>
    <property type="evidence" value="ECO:0000315"/>
    <property type="project" value="FlyBase"/>
</dbReference>
<dbReference type="GO" id="GO:0007601">
    <property type="term" value="P:visual perception"/>
    <property type="evidence" value="ECO:0007669"/>
    <property type="project" value="UniProtKB-KW"/>
</dbReference>
<dbReference type="CDD" id="cd23063">
    <property type="entry name" value="PDZ1_INAD-like"/>
    <property type="match status" value="1"/>
</dbReference>
<dbReference type="CDD" id="cd23064">
    <property type="entry name" value="PDZ3_INAD-like"/>
    <property type="match status" value="1"/>
</dbReference>
<dbReference type="CDD" id="cd23065">
    <property type="entry name" value="PDZ4_INAD-like"/>
    <property type="match status" value="1"/>
</dbReference>
<dbReference type="CDD" id="cd23066">
    <property type="entry name" value="PDZ5_INAD-like"/>
    <property type="match status" value="1"/>
</dbReference>
<dbReference type="CDD" id="cd06672">
    <property type="entry name" value="PDZ8_MUPP1-PDZ7_PATJ-PDZ2_INAD-like"/>
    <property type="match status" value="1"/>
</dbReference>
<dbReference type="FunFam" id="2.30.42.10:FF:000275">
    <property type="entry name" value="Inactivation-no-after-potential D protein"/>
    <property type="match status" value="1"/>
</dbReference>
<dbReference type="FunFam" id="2.30.42.10:FF:000293">
    <property type="entry name" value="Inactivation-no-after-potential D protein"/>
    <property type="match status" value="1"/>
</dbReference>
<dbReference type="FunFam" id="2.30.42.10:FF:000274">
    <property type="entry name" value="inactivation-no-after-potential D protein"/>
    <property type="match status" value="1"/>
</dbReference>
<dbReference type="Gene3D" id="2.30.42.10">
    <property type="match status" value="5"/>
</dbReference>
<dbReference type="InterPro" id="IPR001478">
    <property type="entry name" value="PDZ"/>
</dbReference>
<dbReference type="InterPro" id="IPR051342">
    <property type="entry name" value="PDZ_scaffold"/>
</dbReference>
<dbReference type="InterPro" id="IPR036034">
    <property type="entry name" value="PDZ_sf"/>
</dbReference>
<dbReference type="PANTHER" id="PTHR19964:SF93">
    <property type="entry name" value="INACTIVATION-NO-AFTER-POTENTIAL D PROTEIN"/>
    <property type="match status" value="1"/>
</dbReference>
<dbReference type="PANTHER" id="PTHR19964">
    <property type="entry name" value="MULTIPLE PDZ DOMAIN PROTEIN"/>
    <property type="match status" value="1"/>
</dbReference>
<dbReference type="Pfam" id="PF00595">
    <property type="entry name" value="PDZ"/>
    <property type="match status" value="5"/>
</dbReference>
<dbReference type="SMART" id="SM00228">
    <property type="entry name" value="PDZ"/>
    <property type="match status" value="5"/>
</dbReference>
<dbReference type="SUPFAM" id="SSF50156">
    <property type="entry name" value="PDZ domain-like"/>
    <property type="match status" value="5"/>
</dbReference>
<dbReference type="PROSITE" id="PS50106">
    <property type="entry name" value="PDZ"/>
    <property type="match status" value="5"/>
</dbReference>
<gene>
    <name type="primary">inaD</name>
    <name type="ORF">CG3504</name>
</gene>
<comment type="function">
    <text evidence="6 9">Involved in the negative feedback regulation of the light-activated signaling cascade in photoreceptors through a calcium-mediated process. Interacts with tetrapeptide ligand located in C-terminal sequence of 3 key components of the visual cascade, tethering them and forming a macromolecular signaling phototransduction complex.</text>
</comment>
<comment type="subunit">
    <text evidence="5 6 7 10 11">Interacts with the C-terminus of trp, and with norpA and inaC to form the inaD signaling complex. Interacts with Fkbp59, which together with trpl, rhodopsin and calmodulin may also be part of the inaD complex.</text>
</comment>
<comment type="interaction">
    <interactant intactId="EBI-195326">
        <id>Q24008</id>
    </interactant>
    <interactant intactId="EBI-130595">
        <id>P13677</id>
        <label>inaC</label>
    </interactant>
    <organismsDiffer>false</organismsDiffer>
    <experiments>2</experiments>
</comment>
<comment type="interaction">
    <interactant intactId="EBI-195326">
        <id>Q24008</id>
    </interactant>
    <interactant intactId="EBI-15668597">
        <id>A8WH76</id>
        <label>inaF-B</label>
    </interactant>
    <organismsDiffer>false</organismsDiffer>
    <experiments>2</experiments>
</comment>
<comment type="interaction">
    <interactant intactId="EBI-195326">
        <id>Q24008</id>
    </interactant>
    <interactant intactId="EBI-4306640">
        <id>A3RLX3</id>
        <label>Kon</label>
    </interactant>
    <organismsDiffer>false</organismsDiffer>
    <experiments>3</experiments>
</comment>
<comment type="interaction">
    <interactant intactId="EBI-195326">
        <id>Q24008</id>
    </interactant>
    <interactant intactId="EBI-101510">
        <id>P13217</id>
        <label>norpA</label>
    </interactant>
    <organismsDiffer>false</organismsDiffer>
    <experiments>4</experiments>
</comment>
<comment type="interaction">
    <interactant intactId="EBI-195326">
        <id>Q24008</id>
    </interactant>
    <interactant intactId="EBI-165136">
        <id>P19334</id>
        <label>trp</label>
    </interactant>
    <organismsDiffer>false</organismsDiffer>
    <experiments>10</experiments>
</comment>
<comment type="interaction">
    <interactant intactId="EBI-195326">
        <id>Q24008</id>
    </interactant>
    <interactant intactId="EBI-121784">
        <id>Q9W2S5</id>
        <label>X11Lbeta</label>
    </interactant>
    <organismsDiffer>false</organismsDiffer>
    <experiments>2</experiments>
</comment>
<comment type="interaction">
    <interactant intactId="EBI-195326">
        <id>Q24008</id>
    </interactant>
    <interactant intactId="EBI-1383528">
        <id>P17252</id>
        <label>PRKCA</label>
    </interactant>
    <organismsDiffer>true</organismsDiffer>
    <experiments>2</experiments>
</comment>
<comment type="subcellular location">
    <subcellularLocation>
        <location evidence="11">Cell projection</location>
        <location evidence="11">Rhabdomere</location>
    </subcellularLocation>
</comment>
<comment type="tissue specificity">
    <text evidence="9">Expressed in photoreceptor cells (R cells) of the compound eyes and ocelli.</text>
</comment>
<comment type="domain">
    <text evidence="6">Second PDZ domain is a type I PDZ domain that tethers type I PDZ ligand inaC by interaction with its C-terminus.</text>
</comment>
<comment type="PTM">
    <text evidence="4 8">Phosphorylated by inaC.</text>
</comment>
<protein>
    <recommendedName>
        <fullName>Inactivation-no-after-potential D protein</fullName>
    </recommendedName>
</protein>
<accession>Q24008</accession>
<accession>Q9NBV3</accession>
<keyword id="KW-0002">3D-structure</keyword>
<keyword id="KW-0112">Calmodulin-binding</keyword>
<keyword id="KW-0966">Cell projection</keyword>
<keyword id="KW-0597">Phosphoprotein</keyword>
<keyword id="KW-1185">Reference proteome</keyword>
<keyword id="KW-0677">Repeat</keyword>
<keyword id="KW-0716">Sensory transduction</keyword>
<keyword id="KW-0844">Vision</keyword>
<proteinExistence type="evidence at protein level"/>